<reference key="1">
    <citation type="journal article" date="2001" name="Nature">
        <title>Genome sequence of Yersinia pestis, the causative agent of plague.</title>
        <authorList>
            <person name="Parkhill J."/>
            <person name="Wren B.W."/>
            <person name="Thomson N.R."/>
            <person name="Titball R.W."/>
            <person name="Holden M.T.G."/>
            <person name="Prentice M.B."/>
            <person name="Sebaihia M."/>
            <person name="James K.D."/>
            <person name="Churcher C.M."/>
            <person name="Mungall K.L."/>
            <person name="Baker S."/>
            <person name="Basham D."/>
            <person name="Bentley S.D."/>
            <person name="Brooks K."/>
            <person name="Cerdeno-Tarraga A.-M."/>
            <person name="Chillingworth T."/>
            <person name="Cronin A."/>
            <person name="Davies R.M."/>
            <person name="Davis P."/>
            <person name="Dougan G."/>
            <person name="Feltwell T."/>
            <person name="Hamlin N."/>
            <person name="Holroyd S."/>
            <person name="Jagels K."/>
            <person name="Karlyshev A.V."/>
            <person name="Leather S."/>
            <person name="Moule S."/>
            <person name="Oyston P.C.F."/>
            <person name="Quail M.A."/>
            <person name="Rutherford K.M."/>
            <person name="Simmonds M."/>
            <person name="Skelton J."/>
            <person name="Stevens K."/>
            <person name="Whitehead S."/>
            <person name="Barrell B.G."/>
        </authorList>
    </citation>
    <scope>NUCLEOTIDE SEQUENCE [LARGE SCALE GENOMIC DNA]</scope>
    <source>
        <strain>CO-92 / Biovar Orientalis</strain>
    </source>
</reference>
<reference key="2">
    <citation type="journal article" date="2002" name="J. Bacteriol.">
        <title>Genome sequence of Yersinia pestis KIM.</title>
        <authorList>
            <person name="Deng W."/>
            <person name="Burland V."/>
            <person name="Plunkett G. III"/>
            <person name="Boutin A."/>
            <person name="Mayhew G.F."/>
            <person name="Liss P."/>
            <person name="Perna N.T."/>
            <person name="Rose D.J."/>
            <person name="Mau B."/>
            <person name="Zhou S."/>
            <person name="Schwartz D.C."/>
            <person name="Fetherston J.D."/>
            <person name="Lindler L.E."/>
            <person name="Brubaker R.R."/>
            <person name="Plano G.V."/>
            <person name="Straley S.C."/>
            <person name="McDonough K.A."/>
            <person name="Nilles M.L."/>
            <person name="Matson J.S."/>
            <person name="Blattner F.R."/>
            <person name="Perry R.D."/>
        </authorList>
    </citation>
    <scope>NUCLEOTIDE SEQUENCE [LARGE SCALE GENOMIC DNA]</scope>
    <source>
        <strain>KIM10+ / Biovar Mediaevalis</strain>
    </source>
</reference>
<reference key="3">
    <citation type="journal article" date="2004" name="DNA Res.">
        <title>Complete genome sequence of Yersinia pestis strain 91001, an isolate avirulent to humans.</title>
        <authorList>
            <person name="Song Y."/>
            <person name="Tong Z."/>
            <person name="Wang J."/>
            <person name="Wang L."/>
            <person name="Guo Z."/>
            <person name="Han Y."/>
            <person name="Zhang J."/>
            <person name="Pei D."/>
            <person name="Zhou D."/>
            <person name="Qin H."/>
            <person name="Pang X."/>
            <person name="Han Y."/>
            <person name="Zhai J."/>
            <person name="Li M."/>
            <person name="Cui B."/>
            <person name="Qi Z."/>
            <person name="Jin L."/>
            <person name="Dai R."/>
            <person name="Chen F."/>
            <person name="Li S."/>
            <person name="Ye C."/>
            <person name="Du Z."/>
            <person name="Lin W."/>
            <person name="Wang J."/>
            <person name="Yu J."/>
            <person name="Yang H."/>
            <person name="Wang J."/>
            <person name="Huang P."/>
            <person name="Yang R."/>
        </authorList>
    </citation>
    <scope>NUCLEOTIDE SEQUENCE [LARGE SCALE GENOMIC DNA]</scope>
    <source>
        <strain>91001 / Biovar Mediaevalis</strain>
    </source>
</reference>
<reference key="4">
    <citation type="submission" date="1993-10" db="EMBL/GenBank/DDBJ databases">
        <authorList>
            <person name="Kryukov V.M."/>
            <person name="Suchkov I.Y."/>
            <person name="Sazykin I.S."/>
            <person name="Mishankin B.N."/>
        </authorList>
    </citation>
    <scope>NUCLEOTIDE SEQUENCE [GENOMIC DNA] OF 1-26</scope>
    <source>
        <strain>231</strain>
    </source>
</reference>
<reference key="5">
    <citation type="journal article" date="1994" name="Nucleic Acids Res.">
        <title>A putative regulatory gene downstream of recA is conserved in Gram-negative and Gram-positive bacteria.</title>
        <authorList>
            <person name="de Mot R."/>
            <person name="Schoofs G."/>
            <person name="Vanderleyden J."/>
        </authorList>
    </citation>
    <scope>IDENTIFICATION</scope>
</reference>
<comment type="function">
    <text evidence="1">Modulates RecA activity.</text>
</comment>
<comment type="subcellular location">
    <subcellularLocation>
        <location evidence="3">Cytoplasm</location>
    </subcellularLocation>
</comment>
<comment type="similarity">
    <text evidence="3">Belongs to the RecX family.</text>
</comment>
<keyword id="KW-0963">Cytoplasm</keyword>
<keyword id="KW-1185">Reference proteome</keyword>
<evidence type="ECO:0000250" key="1"/>
<evidence type="ECO:0000256" key="2">
    <source>
        <dbReference type="SAM" id="MobiDB-lite"/>
    </source>
</evidence>
<evidence type="ECO:0000305" key="3"/>
<organism>
    <name type="scientific">Yersinia pestis</name>
    <dbReference type="NCBI Taxonomy" id="632"/>
    <lineage>
        <taxon>Bacteria</taxon>
        <taxon>Pseudomonadati</taxon>
        <taxon>Pseudomonadota</taxon>
        <taxon>Gammaproteobacteria</taxon>
        <taxon>Enterobacterales</taxon>
        <taxon>Yersiniaceae</taxon>
        <taxon>Yersinia</taxon>
    </lineage>
</organism>
<sequence>MNDQLSRAMRLLSQRDHSESELRRKLAAPPFSAKGNWGKRSGAKSSDVVESNLVESNPVESNLAESNAIEESDPQVIEQVIDYCYQHNWLDDSRFAASYINSRSRKGYGVQRIRSELMQKGVDKERILAAFENSEIDWCQLAKEVAQRKFSETLPVEWKEKAKVQRYLLYRGFFQEEIQSIYTDSVE</sequence>
<accession>P37867</accession>
<accession>Q0WBY6</accession>
<name>RECX_YERPE</name>
<protein>
    <recommendedName>
        <fullName>Regulatory protein RecX</fullName>
    </recommendedName>
</protein>
<dbReference type="EMBL" id="AL590842">
    <property type="protein sequence ID" value="CAL21897.1"/>
    <property type="molecule type" value="Genomic_DNA"/>
</dbReference>
<dbReference type="EMBL" id="AE009952">
    <property type="protein sequence ID" value="AAM84466.1"/>
    <property type="molecule type" value="Genomic_DNA"/>
</dbReference>
<dbReference type="EMBL" id="AE017042">
    <property type="protein sequence ID" value="AAS60653.1"/>
    <property type="molecule type" value="Genomic_DNA"/>
</dbReference>
<dbReference type="EMBL" id="X75336">
    <property type="status" value="NOT_ANNOTATED_CDS"/>
    <property type="molecule type" value="Genomic_DNA"/>
</dbReference>
<dbReference type="PIR" id="AF0401">
    <property type="entry name" value="AF0401"/>
</dbReference>
<dbReference type="RefSeq" id="WP_002209447.1">
    <property type="nucleotide sequence ID" value="NZ_WUCK01000052.1"/>
</dbReference>
<dbReference type="RefSeq" id="YP_002348202.1">
    <property type="nucleotide sequence ID" value="NC_003143.1"/>
</dbReference>
<dbReference type="SMR" id="P37867"/>
<dbReference type="IntAct" id="P37867">
    <property type="interactions" value="1"/>
</dbReference>
<dbReference type="STRING" id="214092.YPO3306"/>
<dbReference type="PaxDb" id="214092-YPO3306"/>
<dbReference type="DNASU" id="1145829"/>
<dbReference type="EnsemblBacteria" id="AAS60653">
    <property type="protein sequence ID" value="AAS60653"/>
    <property type="gene ID" value="YP_0380"/>
</dbReference>
<dbReference type="GeneID" id="57975403"/>
<dbReference type="KEGG" id="ype:YPO3306"/>
<dbReference type="KEGG" id="ypk:y0882"/>
<dbReference type="KEGG" id="ypm:YP_0380"/>
<dbReference type="PATRIC" id="fig|214092.21.peg.3776"/>
<dbReference type="eggNOG" id="COG2137">
    <property type="taxonomic scope" value="Bacteria"/>
</dbReference>
<dbReference type="HOGENOM" id="CLU_066607_3_2_6"/>
<dbReference type="OMA" id="EPQDWFE"/>
<dbReference type="OrthoDB" id="7066780at2"/>
<dbReference type="Proteomes" id="UP000000815">
    <property type="component" value="Chromosome"/>
</dbReference>
<dbReference type="Proteomes" id="UP000001019">
    <property type="component" value="Chromosome"/>
</dbReference>
<dbReference type="Proteomes" id="UP000002490">
    <property type="component" value="Chromosome"/>
</dbReference>
<dbReference type="GO" id="GO:0005737">
    <property type="term" value="C:cytoplasm"/>
    <property type="evidence" value="ECO:0007669"/>
    <property type="project" value="UniProtKB-SubCell"/>
</dbReference>
<dbReference type="GO" id="GO:0006282">
    <property type="term" value="P:regulation of DNA repair"/>
    <property type="evidence" value="ECO:0007669"/>
    <property type="project" value="UniProtKB-UniRule"/>
</dbReference>
<dbReference type="Gene3D" id="1.10.10.10">
    <property type="entry name" value="Winged helix-like DNA-binding domain superfamily/Winged helix DNA-binding domain"/>
    <property type="match status" value="3"/>
</dbReference>
<dbReference type="HAMAP" id="MF_01114">
    <property type="entry name" value="RecX"/>
    <property type="match status" value="1"/>
</dbReference>
<dbReference type="InterPro" id="IPR053924">
    <property type="entry name" value="RecX_HTH_2nd"/>
</dbReference>
<dbReference type="InterPro" id="IPR053925">
    <property type="entry name" value="RecX_HTH_3rd"/>
</dbReference>
<dbReference type="InterPro" id="IPR003783">
    <property type="entry name" value="Regulatory_RecX"/>
</dbReference>
<dbReference type="InterPro" id="IPR036388">
    <property type="entry name" value="WH-like_DNA-bd_sf"/>
</dbReference>
<dbReference type="NCBIfam" id="NF001053">
    <property type="entry name" value="PRK00117.1-3"/>
    <property type="match status" value="1"/>
</dbReference>
<dbReference type="PANTHER" id="PTHR33602">
    <property type="entry name" value="REGULATORY PROTEIN RECX FAMILY PROTEIN"/>
    <property type="match status" value="1"/>
</dbReference>
<dbReference type="PANTHER" id="PTHR33602:SF1">
    <property type="entry name" value="REGULATORY PROTEIN RECX FAMILY PROTEIN"/>
    <property type="match status" value="1"/>
</dbReference>
<dbReference type="Pfam" id="PF02631">
    <property type="entry name" value="RecX_HTH2"/>
    <property type="match status" value="1"/>
</dbReference>
<dbReference type="Pfam" id="PF21981">
    <property type="entry name" value="RecX_HTH3"/>
    <property type="match status" value="1"/>
</dbReference>
<gene>
    <name type="primary">recX</name>
    <name type="ordered locus">YPO3306</name>
    <name type="ordered locus">y0882</name>
    <name type="ordered locus">YP_0380</name>
</gene>
<feature type="chain" id="PRO_0000162499" description="Regulatory protein RecX">
    <location>
        <begin position="1"/>
        <end position="187"/>
    </location>
</feature>
<feature type="region of interest" description="Disordered" evidence="2">
    <location>
        <begin position="1"/>
        <end position="44"/>
    </location>
</feature>
<feature type="compositionally biased region" description="Basic and acidic residues" evidence="2">
    <location>
        <begin position="13"/>
        <end position="24"/>
    </location>
</feature>
<feature type="sequence conflict" description="In Ref. 4." evidence="3" ref="4">
    <original>H</original>
    <variation>Q</variation>
    <location>
        <position position="17"/>
    </location>
</feature>
<proteinExistence type="inferred from homology"/>